<evidence type="ECO:0000255" key="1">
    <source>
        <dbReference type="HAMAP-Rule" id="MF_03187"/>
    </source>
</evidence>
<protein>
    <recommendedName>
        <fullName evidence="1">Protein-lysine N-methyltransferase DDB_G0272708</fullName>
        <ecNumber evidence="1">2.1.1.-</ecNumber>
    </recommendedName>
</protein>
<sequence length="211" mass="24823">MSDSSDDEITLSKESLSALQDFYKSREVEQQDKFEISEDWQLSQFWYEEETSKFVANVIEQETIGGNVVVCLSTPSIYKVLHKNNNLLLNNNLFEYDKRFDVYGEKFHFYDYNNPEDGISEQLKGNVDYICLDPPFLSEECIEKVAKTIALLRKPTTRLLLLTGRIQWNNIQKYLPEMMICEFEPKHPRLQNDFFCCSNYHSKLLGLENKK</sequence>
<dbReference type="EC" id="2.1.1.-" evidence="1"/>
<dbReference type="EMBL" id="AAFI02000008">
    <property type="protein sequence ID" value="EAL70991.1"/>
    <property type="molecule type" value="Genomic_DNA"/>
</dbReference>
<dbReference type="RefSeq" id="XP_644873.1">
    <property type="nucleotide sequence ID" value="XM_639781.1"/>
</dbReference>
<dbReference type="SMR" id="Q86A24"/>
<dbReference type="FunCoup" id="Q86A24">
    <property type="interactions" value="269"/>
</dbReference>
<dbReference type="STRING" id="44689.Q86A24"/>
<dbReference type="PaxDb" id="44689-DDB0168893"/>
<dbReference type="EnsemblProtists" id="EAL70991">
    <property type="protein sequence ID" value="EAL70991"/>
    <property type="gene ID" value="DDB_G0272708"/>
</dbReference>
<dbReference type="GeneID" id="8618552"/>
<dbReference type="KEGG" id="ddi:DDB_G0272708"/>
<dbReference type="dictyBase" id="DDB_G0272708"/>
<dbReference type="VEuPathDB" id="AmoebaDB:DDB_G0272708"/>
<dbReference type="eggNOG" id="KOG3350">
    <property type="taxonomic scope" value="Eukaryota"/>
</dbReference>
<dbReference type="HOGENOM" id="CLU_074410_4_0_1"/>
<dbReference type="InParanoid" id="Q86A24"/>
<dbReference type="OMA" id="CNFRPEH"/>
<dbReference type="PhylomeDB" id="Q86A24"/>
<dbReference type="Reactome" id="R-DDI-8876725">
    <property type="pathway name" value="Protein methylation"/>
</dbReference>
<dbReference type="PRO" id="PR:Q86A24"/>
<dbReference type="Proteomes" id="UP000002195">
    <property type="component" value="Chromosome 2"/>
</dbReference>
<dbReference type="GO" id="GO:0005737">
    <property type="term" value="C:cytoplasm"/>
    <property type="evidence" value="ECO:0007669"/>
    <property type="project" value="UniProtKB-SubCell"/>
</dbReference>
<dbReference type="GO" id="GO:0016279">
    <property type="term" value="F:protein-lysine N-methyltransferase activity"/>
    <property type="evidence" value="ECO:0007669"/>
    <property type="project" value="UniProtKB-UniRule"/>
</dbReference>
<dbReference type="GO" id="GO:0032259">
    <property type="term" value="P:methylation"/>
    <property type="evidence" value="ECO:0007669"/>
    <property type="project" value="UniProtKB-KW"/>
</dbReference>
<dbReference type="HAMAP" id="MF_03187">
    <property type="entry name" value="Methyltr_EFM5"/>
    <property type="match status" value="1"/>
</dbReference>
<dbReference type="InterPro" id="IPR019369">
    <property type="entry name" value="Efm5/EEF1AKMT1"/>
</dbReference>
<dbReference type="InterPro" id="IPR041370">
    <property type="entry name" value="Mlase_EEF1AKMT1/ZCCHC4"/>
</dbReference>
<dbReference type="PANTHER" id="PTHR13200">
    <property type="entry name" value="EEF1A LYSINE METHYLTRANSFERASE 1"/>
    <property type="match status" value="1"/>
</dbReference>
<dbReference type="PANTHER" id="PTHR13200:SF0">
    <property type="entry name" value="EEF1A LYSINE METHYLTRANSFERASE 1"/>
    <property type="match status" value="1"/>
</dbReference>
<dbReference type="Pfam" id="PF10237">
    <property type="entry name" value="N6-adenineMlase"/>
    <property type="match status" value="1"/>
</dbReference>
<reference key="1">
    <citation type="journal article" date="2002" name="Nature">
        <title>Sequence and analysis of chromosome 2 of Dictyostelium discoideum.</title>
        <authorList>
            <person name="Gloeckner G."/>
            <person name="Eichinger L."/>
            <person name="Szafranski K."/>
            <person name="Pachebat J.A."/>
            <person name="Bankier A.T."/>
            <person name="Dear P.H."/>
            <person name="Lehmann R."/>
            <person name="Baumgart C."/>
            <person name="Parra G."/>
            <person name="Abril J.F."/>
            <person name="Guigo R."/>
            <person name="Kumpf K."/>
            <person name="Tunggal B."/>
            <person name="Cox E.C."/>
            <person name="Quail M.A."/>
            <person name="Platzer M."/>
            <person name="Rosenthal A."/>
            <person name="Noegel A.A."/>
        </authorList>
    </citation>
    <scope>NUCLEOTIDE SEQUENCE [LARGE SCALE GENOMIC DNA]</scope>
    <source>
        <strain>AX4</strain>
    </source>
</reference>
<reference key="2">
    <citation type="journal article" date="2005" name="Nature">
        <title>The genome of the social amoeba Dictyostelium discoideum.</title>
        <authorList>
            <person name="Eichinger L."/>
            <person name="Pachebat J.A."/>
            <person name="Gloeckner G."/>
            <person name="Rajandream M.A."/>
            <person name="Sucgang R."/>
            <person name="Berriman M."/>
            <person name="Song J."/>
            <person name="Olsen R."/>
            <person name="Szafranski K."/>
            <person name="Xu Q."/>
            <person name="Tunggal B."/>
            <person name="Kummerfeld S."/>
            <person name="Madera M."/>
            <person name="Konfortov B.A."/>
            <person name="Rivero F."/>
            <person name="Bankier A.T."/>
            <person name="Lehmann R."/>
            <person name="Hamlin N."/>
            <person name="Davies R."/>
            <person name="Gaudet P."/>
            <person name="Fey P."/>
            <person name="Pilcher K."/>
            <person name="Chen G."/>
            <person name="Saunders D."/>
            <person name="Sodergren E.J."/>
            <person name="Davis P."/>
            <person name="Kerhornou A."/>
            <person name="Nie X."/>
            <person name="Hall N."/>
            <person name="Anjard C."/>
            <person name="Hemphill L."/>
            <person name="Bason N."/>
            <person name="Farbrother P."/>
            <person name="Desany B."/>
            <person name="Just E."/>
            <person name="Morio T."/>
            <person name="Rost R."/>
            <person name="Churcher C.M."/>
            <person name="Cooper J."/>
            <person name="Haydock S."/>
            <person name="van Driessche N."/>
            <person name="Cronin A."/>
            <person name="Goodhead I."/>
            <person name="Muzny D.M."/>
            <person name="Mourier T."/>
            <person name="Pain A."/>
            <person name="Lu M."/>
            <person name="Harper D."/>
            <person name="Lindsay R."/>
            <person name="Hauser H."/>
            <person name="James K.D."/>
            <person name="Quiles M."/>
            <person name="Madan Babu M."/>
            <person name="Saito T."/>
            <person name="Buchrieser C."/>
            <person name="Wardroper A."/>
            <person name="Felder M."/>
            <person name="Thangavelu M."/>
            <person name="Johnson D."/>
            <person name="Knights A."/>
            <person name="Loulseged H."/>
            <person name="Mungall K.L."/>
            <person name="Oliver K."/>
            <person name="Price C."/>
            <person name="Quail M.A."/>
            <person name="Urushihara H."/>
            <person name="Hernandez J."/>
            <person name="Rabbinowitsch E."/>
            <person name="Steffen D."/>
            <person name="Sanders M."/>
            <person name="Ma J."/>
            <person name="Kohara Y."/>
            <person name="Sharp S."/>
            <person name="Simmonds M.N."/>
            <person name="Spiegler S."/>
            <person name="Tivey A."/>
            <person name="Sugano S."/>
            <person name="White B."/>
            <person name="Walker D."/>
            <person name="Woodward J.R."/>
            <person name="Winckler T."/>
            <person name="Tanaka Y."/>
            <person name="Shaulsky G."/>
            <person name="Schleicher M."/>
            <person name="Weinstock G.M."/>
            <person name="Rosenthal A."/>
            <person name="Cox E.C."/>
            <person name="Chisholm R.L."/>
            <person name="Gibbs R.A."/>
            <person name="Loomis W.F."/>
            <person name="Platzer M."/>
            <person name="Kay R.R."/>
            <person name="Williams J.G."/>
            <person name="Dear P.H."/>
            <person name="Noegel A.A."/>
            <person name="Barrell B.G."/>
            <person name="Kuspa A."/>
        </authorList>
    </citation>
    <scope>NUCLEOTIDE SEQUENCE [LARGE SCALE GENOMIC DNA]</scope>
    <source>
        <strain>AX4</strain>
    </source>
</reference>
<feature type="chain" id="PRO_0000328751" description="Protein-lysine N-methyltransferase DDB_G0272708">
    <location>
        <begin position="1"/>
        <end position="211"/>
    </location>
</feature>
<name>EFM5_DICDI</name>
<organism>
    <name type="scientific">Dictyostelium discoideum</name>
    <name type="common">Social amoeba</name>
    <dbReference type="NCBI Taxonomy" id="44689"/>
    <lineage>
        <taxon>Eukaryota</taxon>
        <taxon>Amoebozoa</taxon>
        <taxon>Evosea</taxon>
        <taxon>Eumycetozoa</taxon>
        <taxon>Dictyostelia</taxon>
        <taxon>Dictyosteliales</taxon>
        <taxon>Dictyosteliaceae</taxon>
        <taxon>Dictyostelium</taxon>
    </lineage>
</organism>
<gene>
    <name type="ORF">DDB_G0272708</name>
</gene>
<keyword id="KW-0963">Cytoplasm</keyword>
<keyword id="KW-0489">Methyltransferase</keyword>
<keyword id="KW-1185">Reference proteome</keyword>
<keyword id="KW-0808">Transferase</keyword>
<accession>Q86A24</accession>
<accession>Q559E3</accession>
<proteinExistence type="inferred from homology"/>
<comment type="function">
    <text evidence="1">S-adenosyl-L-methionine-dependent protein-lysine N-methyltransferase that methylates elongation factor 1-alpha.</text>
</comment>
<comment type="subcellular location">
    <subcellularLocation>
        <location evidence="1">Cytoplasm</location>
    </subcellularLocation>
</comment>
<comment type="similarity">
    <text evidence="1">Belongs to the class I-like SAM-binding methyltransferase superfamily. EFM5 family.</text>
</comment>